<evidence type="ECO:0000250" key="1"/>
<evidence type="ECO:0000255" key="2"/>
<evidence type="ECO:0000305" key="3"/>
<sequence>MGILFTRIWRLFNHQEHKVIIVGLDNAGKTTILYQFSMNEVVHTSPTIGSNVEEIVVNNTRFLMWDIGGQESLRPSWNTYYTNTEFVIVVVDSTDRERISVTREELYKMLAHEDLRKAGLLIFANKQDVKECMTVAEISQFLKLTSIKDHQWHIQACCALTGEGLCQGLEWMMSRLKIR</sequence>
<accession>Q80ZU0</accession>
<keyword id="KW-0342">GTP-binding</keyword>
<keyword id="KW-0449">Lipoprotein</keyword>
<keyword id="KW-0519">Myristate</keyword>
<keyword id="KW-0547">Nucleotide-binding</keyword>
<keyword id="KW-1185">Reference proteome</keyword>
<dbReference type="EMBL" id="BC048170">
    <property type="protein sequence ID" value="AAH48170.1"/>
    <property type="molecule type" value="mRNA"/>
</dbReference>
<dbReference type="CCDS" id="CCDS16033.1"/>
<dbReference type="RefSeq" id="NP_892039.1">
    <property type="nucleotide sequence ID" value="NM_182994.2"/>
</dbReference>
<dbReference type="SMR" id="Q80ZU0"/>
<dbReference type="FunCoup" id="Q80ZU0">
    <property type="interactions" value="3197"/>
</dbReference>
<dbReference type="STRING" id="10090.ENSMUSP00000041756"/>
<dbReference type="PhosphoSitePlus" id="Q80ZU0"/>
<dbReference type="PaxDb" id="10090-ENSMUSP00000041756"/>
<dbReference type="ProteomicsDB" id="283223"/>
<dbReference type="Pumba" id="Q80ZU0"/>
<dbReference type="Antibodypedia" id="33675">
    <property type="antibodies" value="68 antibodies from 16 providers"/>
</dbReference>
<dbReference type="DNASU" id="75423"/>
<dbReference type="Ensembl" id="ENSMUST00000036541.8">
    <property type="protein sequence ID" value="ENSMUSP00000041756.8"/>
    <property type="gene ID" value="ENSMUSG00000036093.8"/>
</dbReference>
<dbReference type="GeneID" id="75423"/>
<dbReference type="KEGG" id="mmu:75423"/>
<dbReference type="UCSC" id="uc008jqy.1">
    <property type="organism name" value="mouse"/>
</dbReference>
<dbReference type="AGR" id="MGI:1922673"/>
<dbReference type="CTD" id="26225"/>
<dbReference type="MGI" id="MGI:1922673">
    <property type="gene designation" value="Arl5a"/>
</dbReference>
<dbReference type="VEuPathDB" id="HostDB:ENSMUSG00000036093"/>
<dbReference type="eggNOG" id="KOG0070">
    <property type="taxonomic scope" value="Eukaryota"/>
</dbReference>
<dbReference type="GeneTree" id="ENSGT00940000154714"/>
<dbReference type="HOGENOM" id="CLU_040729_9_1_1"/>
<dbReference type="InParanoid" id="Q80ZU0"/>
<dbReference type="OMA" id="ILFARIW"/>
<dbReference type="OrthoDB" id="2011769at2759"/>
<dbReference type="PhylomeDB" id="Q80ZU0"/>
<dbReference type="TreeFam" id="TF105465"/>
<dbReference type="BioGRID-ORCS" id="75423">
    <property type="hits" value="1 hit in 75 CRISPR screens"/>
</dbReference>
<dbReference type="ChiTaRS" id="Arl5a">
    <property type="organism name" value="mouse"/>
</dbReference>
<dbReference type="PRO" id="PR:Q80ZU0"/>
<dbReference type="Proteomes" id="UP000000589">
    <property type="component" value="Chromosome 2"/>
</dbReference>
<dbReference type="RNAct" id="Q80ZU0">
    <property type="molecule type" value="protein"/>
</dbReference>
<dbReference type="Bgee" id="ENSMUSG00000036093">
    <property type="expression patterns" value="Expressed in optic fissure and 276 other cell types or tissues"/>
</dbReference>
<dbReference type="ExpressionAtlas" id="Q80ZU0">
    <property type="expression patterns" value="baseline and differential"/>
</dbReference>
<dbReference type="GO" id="GO:0005525">
    <property type="term" value="F:GTP binding"/>
    <property type="evidence" value="ECO:0007669"/>
    <property type="project" value="UniProtKB-KW"/>
</dbReference>
<dbReference type="GO" id="GO:0003924">
    <property type="term" value="F:GTPase activity"/>
    <property type="evidence" value="ECO:0007669"/>
    <property type="project" value="InterPro"/>
</dbReference>
<dbReference type="GO" id="GO:1903292">
    <property type="term" value="P:protein localization to Golgi membrane"/>
    <property type="evidence" value="ECO:0007669"/>
    <property type="project" value="Ensembl"/>
</dbReference>
<dbReference type="CDD" id="cd04153">
    <property type="entry name" value="Arl5_Arl8"/>
    <property type="match status" value="1"/>
</dbReference>
<dbReference type="FunFam" id="3.40.50.300:FF:000294">
    <property type="entry name" value="ADP-ribosylation factor-like protein 5A"/>
    <property type="match status" value="1"/>
</dbReference>
<dbReference type="Gene3D" id="3.40.50.300">
    <property type="entry name" value="P-loop containing nucleotide triphosphate hydrolases"/>
    <property type="match status" value="1"/>
</dbReference>
<dbReference type="InterPro" id="IPR027417">
    <property type="entry name" value="P-loop_NTPase"/>
</dbReference>
<dbReference type="InterPro" id="IPR005225">
    <property type="entry name" value="Small_GTP-bd"/>
</dbReference>
<dbReference type="InterPro" id="IPR024156">
    <property type="entry name" value="Small_GTPase_ARF"/>
</dbReference>
<dbReference type="InterPro" id="IPR006689">
    <property type="entry name" value="Small_GTPase_ARF/SAR"/>
</dbReference>
<dbReference type="NCBIfam" id="TIGR00231">
    <property type="entry name" value="small_GTP"/>
    <property type="match status" value="1"/>
</dbReference>
<dbReference type="PANTHER" id="PTHR11711">
    <property type="entry name" value="ADP RIBOSYLATION FACTOR-RELATED"/>
    <property type="match status" value="1"/>
</dbReference>
<dbReference type="Pfam" id="PF00025">
    <property type="entry name" value="Arf"/>
    <property type="match status" value="1"/>
</dbReference>
<dbReference type="PRINTS" id="PR00328">
    <property type="entry name" value="SAR1GTPBP"/>
</dbReference>
<dbReference type="SMART" id="SM00177">
    <property type="entry name" value="ARF"/>
    <property type="match status" value="1"/>
</dbReference>
<dbReference type="SMART" id="SM00178">
    <property type="entry name" value="SAR"/>
    <property type="match status" value="1"/>
</dbReference>
<dbReference type="SUPFAM" id="SSF52540">
    <property type="entry name" value="P-loop containing nucleoside triphosphate hydrolases"/>
    <property type="match status" value="1"/>
</dbReference>
<dbReference type="PROSITE" id="PS51417">
    <property type="entry name" value="ARF"/>
    <property type="match status" value="1"/>
</dbReference>
<reference key="1">
    <citation type="journal article" date="2004" name="Genome Res.">
        <title>The status, quality, and expansion of the NIH full-length cDNA project: the Mammalian Gene Collection (MGC).</title>
        <authorList>
            <consortium name="The MGC Project Team"/>
        </authorList>
    </citation>
    <scope>NUCLEOTIDE SEQUENCE [LARGE SCALE MRNA]</scope>
    <source>
        <strain>C57BL/6J</strain>
        <tissue>Brain</tissue>
    </source>
</reference>
<reference key="2">
    <citation type="journal article" date="2010" name="Cell">
        <title>A tissue-specific atlas of mouse protein phosphorylation and expression.</title>
        <authorList>
            <person name="Huttlin E.L."/>
            <person name="Jedrychowski M.P."/>
            <person name="Elias J.E."/>
            <person name="Goswami T."/>
            <person name="Rad R."/>
            <person name="Beausoleil S.A."/>
            <person name="Villen J."/>
            <person name="Haas W."/>
            <person name="Sowa M.E."/>
            <person name="Gygi S.P."/>
        </authorList>
    </citation>
    <scope>IDENTIFICATION BY MASS SPECTROMETRY [LARGE SCALE ANALYSIS]</scope>
    <source>
        <tissue>Kidney</tissue>
        <tissue>Liver</tissue>
    </source>
</reference>
<organism>
    <name type="scientific">Mus musculus</name>
    <name type="common">Mouse</name>
    <dbReference type="NCBI Taxonomy" id="10090"/>
    <lineage>
        <taxon>Eukaryota</taxon>
        <taxon>Metazoa</taxon>
        <taxon>Chordata</taxon>
        <taxon>Craniata</taxon>
        <taxon>Vertebrata</taxon>
        <taxon>Euteleostomi</taxon>
        <taxon>Mammalia</taxon>
        <taxon>Eutheria</taxon>
        <taxon>Euarchontoglires</taxon>
        <taxon>Glires</taxon>
        <taxon>Rodentia</taxon>
        <taxon>Myomorpha</taxon>
        <taxon>Muroidea</taxon>
        <taxon>Muridae</taxon>
        <taxon>Murinae</taxon>
        <taxon>Mus</taxon>
        <taxon>Mus</taxon>
    </lineage>
</organism>
<proteinExistence type="evidence at protein level"/>
<name>ARL5A_MOUSE</name>
<comment type="function">
    <text evidence="1">Lacks ADP-ribosylation enhancing activity.</text>
</comment>
<comment type="similarity">
    <text evidence="3">Belongs to the small GTPase superfamily. Arf family.</text>
</comment>
<gene>
    <name type="primary">Arl5a</name>
    <name type="synonym">Arl5</name>
</gene>
<protein>
    <recommendedName>
        <fullName>ADP-ribosylation factor-like protein 5A</fullName>
    </recommendedName>
</protein>
<feature type="initiator methionine" description="Removed" evidence="2">
    <location>
        <position position="1"/>
    </location>
</feature>
<feature type="chain" id="PRO_0000207468" description="ADP-ribosylation factor-like protein 5A">
    <location>
        <begin position="2"/>
        <end position="179"/>
    </location>
</feature>
<feature type="binding site" evidence="1">
    <location>
        <begin position="23"/>
        <end position="30"/>
    </location>
    <ligand>
        <name>GTP</name>
        <dbReference type="ChEBI" id="CHEBI:37565"/>
    </ligand>
</feature>
<feature type="binding site" evidence="1">
    <location>
        <begin position="66"/>
        <end position="70"/>
    </location>
    <ligand>
        <name>GTP</name>
        <dbReference type="ChEBI" id="CHEBI:37565"/>
    </ligand>
</feature>
<feature type="binding site" evidence="1">
    <location>
        <begin position="125"/>
        <end position="128"/>
    </location>
    <ligand>
        <name>GTP</name>
        <dbReference type="ChEBI" id="CHEBI:37565"/>
    </ligand>
</feature>
<feature type="binding site" evidence="1">
    <location>
        <position position="159"/>
    </location>
    <ligand>
        <name>GTP</name>
        <dbReference type="ChEBI" id="CHEBI:37565"/>
    </ligand>
</feature>
<feature type="lipid moiety-binding region" description="N-myristoyl glycine" evidence="2">
    <location>
        <position position="2"/>
    </location>
</feature>